<feature type="chain" id="PRO_0000210333" description="Transcription elongation factor SPT4">
    <location>
        <begin position="1"/>
        <end position="120"/>
    </location>
</feature>
<feature type="zinc finger region" description="C4-type" evidence="2">
    <location>
        <begin position="15"/>
        <end position="35"/>
    </location>
</feature>
<feature type="region of interest" description="Interaction with spt-5" evidence="1">
    <location>
        <begin position="1"/>
        <end position="39"/>
    </location>
</feature>
<name>SPT4H_CAEBR</name>
<dbReference type="EMBL" id="HE600978">
    <property type="protein sequence ID" value="CAP21757.1"/>
    <property type="molecule type" value="Genomic_DNA"/>
</dbReference>
<dbReference type="SMR" id="Q628A6"/>
<dbReference type="FunCoup" id="Q628A6">
    <property type="interactions" value="1819"/>
</dbReference>
<dbReference type="STRING" id="6238.Q628A6"/>
<dbReference type="EnsemblMetazoa" id="CBG00462.1">
    <property type="protein sequence ID" value="CBG00462.1"/>
    <property type="gene ID" value="WBGene00023846"/>
</dbReference>
<dbReference type="KEGG" id="cbr:CBG_00462"/>
<dbReference type="CTD" id="8582899"/>
<dbReference type="WormBase" id="CBG00462">
    <property type="protein sequence ID" value="CBP00080"/>
    <property type="gene ID" value="WBGene00023846"/>
    <property type="gene designation" value="Cbr-spt-4"/>
</dbReference>
<dbReference type="eggNOG" id="KOG3490">
    <property type="taxonomic scope" value="Eukaryota"/>
</dbReference>
<dbReference type="HOGENOM" id="CLU_138052_3_0_1"/>
<dbReference type="InParanoid" id="Q628A6"/>
<dbReference type="OMA" id="FDGMIAV"/>
<dbReference type="Proteomes" id="UP000008549">
    <property type="component" value="Unassembled WGS sequence"/>
</dbReference>
<dbReference type="GO" id="GO:0032044">
    <property type="term" value="C:DSIF complex"/>
    <property type="evidence" value="ECO:0000318"/>
    <property type="project" value="GO_Central"/>
</dbReference>
<dbReference type="GO" id="GO:0000993">
    <property type="term" value="F:RNA polymerase II complex binding"/>
    <property type="evidence" value="ECO:0000318"/>
    <property type="project" value="GO_Central"/>
</dbReference>
<dbReference type="GO" id="GO:0008270">
    <property type="term" value="F:zinc ion binding"/>
    <property type="evidence" value="ECO:0007669"/>
    <property type="project" value="UniProtKB-KW"/>
</dbReference>
<dbReference type="GO" id="GO:0006355">
    <property type="term" value="P:regulation of DNA-templated transcription"/>
    <property type="evidence" value="ECO:0007669"/>
    <property type="project" value="InterPro"/>
</dbReference>
<dbReference type="GO" id="GO:0006368">
    <property type="term" value="P:transcription elongation by RNA polymerase II"/>
    <property type="evidence" value="ECO:0000318"/>
    <property type="project" value="GO_Central"/>
</dbReference>
<dbReference type="GO" id="GO:0140673">
    <property type="term" value="P:transcription elongation-coupled chromatin remodeling"/>
    <property type="evidence" value="ECO:0007669"/>
    <property type="project" value="InterPro"/>
</dbReference>
<dbReference type="CDD" id="cd07973">
    <property type="entry name" value="Spt4"/>
    <property type="match status" value="1"/>
</dbReference>
<dbReference type="FunFam" id="3.30.40.210:FF:000010">
    <property type="entry name" value="Transcription elongation factor SPT4"/>
    <property type="match status" value="1"/>
</dbReference>
<dbReference type="Gene3D" id="3.30.40.210">
    <property type="match status" value="1"/>
</dbReference>
<dbReference type="InterPro" id="IPR029040">
    <property type="entry name" value="RPABC4/Spt4"/>
</dbReference>
<dbReference type="InterPro" id="IPR009287">
    <property type="entry name" value="Spt4"/>
</dbReference>
<dbReference type="InterPro" id="IPR022800">
    <property type="entry name" value="Spt4/RpoE2_Znf"/>
</dbReference>
<dbReference type="InterPro" id="IPR038510">
    <property type="entry name" value="Spt4_sf"/>
</dbReference>
<dbReference type="PANTHER" id="PTHR12882">
    <property type="entry name" value="SUPPRESSOR OF TY 4"/>
    <property type="match status" value="1"/>
</dbReference>
<dbReference type="PANTHER" id="PTHR12882:SF1">
    <property type="entry name" value="TRANSCRIPTION ELONGATION FACTOR SPT4"/>
    <property type="match status" value="1"/>
</dbReference>
<dbReference type="Pfam" id="PF06093">
    <property type="entry name" value="Spt4"/>
    <property type="match status" value="1"/>
</dbReference>
<dbReference type="PIRSF" id="PIRSF025023">
    <property type="entry name" value="Spt4"/>
    <property type="match status" value="1"/>
</dbReference>
<dbReference type="SMART" id="SM01389">
    <property type="entry name" value="Spt4"/>
    <property type="match status" value="1"/>
</dbReference>
<dbReference type="SUPFAM" id="SSF63393">
    <property type="entry name" value="RNA polymerase subunits"/>
    <property type="match status" value="1"/>
</dbReference>
<protein>
    <recommendedName>
        <fullName>Transcription elongation factor SPT4</fullName>
    </recommendedName>
    <alternativeName>
        <fullName>DRB sensitivity-inducing factor small subunit</fullName>
        <shortName>DSIF small subunit</shortName>
    </alternativeName>
</protein>
<sequence>MAASIPSDLRNLRACLLCSLIKSVDAFQTDGCENCDEVLHLKGDEEKVYDCTSANYDGMIAAMSNDDSWVCKWQKMQRRVKGIYAISVSGSLPSNVVSDLKSMGVRYKANQRDYSIQAKK</sequence>
<keyword id="KW-0010">Activator</keyword>
<keyword id="KW-0479">Metal-binding</keyword>
<keyword id="KW-0539">Nucleus</keyword>
<keyword id="KW-1185">Reference proteome</keyword>
<keyword id="KW-0678">Repressor</keyword>
<keyword id="KW-0804">Transcription</keyword>
<keyword id="KW-0805">Transcription regulation</keyword>
<keyword id="KW-0862">Zinc</keyword>
<keyword id="KW-0863">Zinc-finger</keyword>
<gene>
    <name type="primary">spt-4</name>
    <name type="ORF">CBG00462</name>
</gene>
<proteinExistence type="inferred from homology"/>
<accession>Q628A6</accession>
<accession>A8WMQ2</accession>
<reference key="1">
    <citation type="journal article" date="2003" name="PLoS Biol.">
        <title>The genome sequence of Caenorhabditis briggsae: a platform for comparative genomics.</title>
        <authorList>
            <person name="Stein L.D."/>
            <person name="Bao Z."/>
            <person name="Blasiar D."/>
            <person name="Blumenthal T."/>
            <person name="Brent M.R."/>
            <person name="Chen N."/>
            <person name="Chinwalla A."/>
            <person name="Clarke L."/>
            <person name="Clee C."/>
            <person name="Coghlan A."/>
            <person name="Coulson A."/>
            <person name="D'Eustachio P."/>
            <person name="Fitch D.H.A."/>
            <person name="Fulton L.A."/>
            <person name="Fulton R.E."/>
            <person name="Griffiths-Jones S."/>
            <person name="Harris T.W."/>
            <person name="Hillier L.W."/>
            <person name="Kamath R."/>
            <person name="Kuwabara P.E."/>
            <person name="Mardis E.R."/>
            <person name="Marra M.A."/>
            <person name="Miner T.L."/>
            <person name="Minx P."/>
            <person name="Mullikin J.C."/>
            <person name="Plumb R.W."/>
            <person name="Rogers J."/>
            <person name="Schein J.E."/>
            <person name="Sohrmann M."/>
            <person name="Spieth J."/>
            <person name="Stajich J.E."/>
            <person name="Wei C."/>
            <person name="Willey D."/>
            <person name="Wilson R.K."/>
            <person name="Durbin R.M."/>
            <person name="Waterston R.H."/>
        </authorList>
    </citation>
    <scope>NUCLEOTIDE SEQUENCE [LARGE SCALE GENOMIC DNA]</scope>
    <source>
        <strain>AF16</strain>
    </source>
</reference>
<evidence type="ECO:0000250" key="1"/>
<evidence type="ECO:0000255" key="2"/>
<evidence type="ECO:0000305" key="3"/>
<comment type="function">
    <text evidence="1">May function as a component of the DRB sensitivity-inducing factor complex (DSIF complex), which regulates transcription elongation by RNA polymerase II. DSIF may enhance transcriptional pausing at sites proximal to the promoter, which may in turn facilitate the assembly of an elongation competent RNA polymerase II complex (By similarity).</text>
</comment>
<comment type="subunit">
    <text evidence="1">Interacts with spt-5 to form DSIF. DSIF interacts with RNA polymerase II and with the positive transcription elongation factor b complex (P-TEFb complex), which is composed of cdk-9 and cyclin-T (By similarity).</text>
</comment>
<comment type="subcellular location">
    <subcellularLocation>
        <location evidence="1">Nucleus</location>
    </subcellularLocation>
</comment>
<comment type="similarity">
    <text evidence="3">Belongs to the SPT4 family.</text>
</comment>
<organism>
    <name type="scientific">Caenorhabditis briggsae</name>
    <dbReference type="NCBI Taxonomy" id="6238"/>
    <lineage>
        <taxon>Eukaryota</taxon>
        <taxon>Metazoa</taxon>
        <taxon>Ecdysozoa</taxon>
        <taxon>Nematoda</taxon>
        <taxon>Chromadorea</taxon>
        <taxon>Rhabditida</taxon>
        <taxon>Rhabditina</taxon>
        <taxon>Rhabditomorpha</taxon>
        <taxon>Rhabditoidea</taxon>
        <taxon>Rhabditidae</taxon>
        <taxon>Peloderinae</taxon>
        <taxon>Caenorhabditis</taxon>
    </lineage>
</organism>